<dbReference type="EC" id="2.2.1.7" evidence="1"/>
<dbReference type="EMBL" id="CP000668">
    <property type="protein sequence ID" value="ABP41174.1"/>
    <property type="molecule type" value="Genomic_DNA"/>
</dbReference>
<dbReference type="RefSeq" id="WP_002208662.1">
    <property type="nucleotide sequence ID" value="NZ_CP009715.1"/>
</dbReference>
<dbReference type="SMR" id="A4TPG2"/>
<dbReference type="GeneID" id="57975536"/>
<dbReference type="KEGG" id="ypp:YPDSF_2812"/>
<dbReference type="PATRIC" id="fig|386656.14.peg.70"/>
<dbReference type="UniPathway" id="UPA00064">
    <property type="reaction ID" value="UER00091"/>
</dbReference>
<dbReference type="GO" id="GO:0005829">
    <property type="term" value="C:cytosol"/>
    <property type="evidence" value="ECO:0007669"/>
    <property type="project" value="TreeGrafter"/>
</dbReference>
<dbReference type="GO" id="GO:0008661">
    <property type="term" value="F:1-deoxy-D-xylulose-5-phosphate synthase activity"/>
    <property type="evidence" value="ECO:0007669"/>
    <property type="project" value="UniProtKB-UniRule"/>
</dbReference>
<dbReference type="GO" id="GO:0000287">
    <property type="term" value="F:magnesium ion binding"/>
    <property type="evidence" value="ECO:0007669"/>
    <property type="project" value="UniProtKB-UniRule"/>
</dbReference>
<dbReference type="GO" id="GO:0030976">
    <property type="term" value="F:thiamine pyrophosphate binding"/>
    <property type="evidence" value="ECO:0007669"/>
    <property type="project" value="UniProtKB-UniRule"/>
</dbReference>
<dbReference type="GO" id="GO:0052865">
    <property type="term" value="P:1-deoxy-D-xylulose 5-phosphate biosynthetic process"/>
    <property type="evidence" value="ECO:0007669"/>
    <property type="project" value="UniProtKB-UniPathway"/>
</dbReference>
<dbReference type="GO" id="GO:0019288">
    <property type="term" value="P:isopentenyl diphosphate biosynthetic process, methylerythritol 4-phosphate pathway"/>
    <property type="evidence" value="ECO:0007669"/>
    <property type="project" value="TreeGrafter"/>
</dbReference>
<dbReference type="GO" id="GO:0016114">
    <property type="term" value="P:terpenoid biosynthetic process"/>
    <property type="evidence" value="ECO:0007669"/>
    <property type="project" value="UniProtKB-UniRule"/>
</dbReference>
<dbReference type="GO" id="GO:0009228">
    <property type="term" value="P:thiamine biosynthetic process"/>
    <property type="evidence" value="ECO:0007669"/>
    <property type="project" value="UniProtKB-UniRule"/>
</dbReference>
<dbReference type="CDD" id="cd02007">
    <property type="entry name" value="TPP_DXS"/>
    <property type="match status" value="1"/>
</dbReference>
<dbReference type="CDD" id="cd07033">
    <property type="entry name" value="TPP_PYR_DXS_TK_like"/>
    <property type="match status" value="1"/>
</dbReference>
<dbReference type="FunFam" id="3.40.50.920:FF:000002">
    <property type="entry name" value="1-deoxy-D-xylulose-5-phosphate synthase"/>
    <property type="match status" value="1"/>
</dbReference>
<dbReference type="FunFam" id="3.40.50.970:FF:000005">
    <property type="entry name" value="1-deoxy-D-xylulose-5-phosphate synthase"/>
    <property type="match status" value="1"/>
</dbReference>
<dbReference type="Gene3D" id="3.40.50.920">
    <property type="match status" value="1"/>
</dbReference>
<dbReference type="Gene3D" id="3.40.50.970">
    <property type="match status" value="2"/>
</dbReference>
<dbReference type="HAMAP" id="MF_00315">
    <property type="entry name" value="DXP_synth"/>
    <property type="match status" value="1"/>
</dbReference>
<dbReference type="InterPro" id="IPR005477">
    <property type="entry name" value="Dxylulose-5-P_synthase"/>
</dbReference>
<dbReference type="InterPro" id="IPR029061">
    <property type="entry name" value="THDP-binding"/>
</dbReference>
<dbReference type="InterPro" id="IPR009014">
    <property type="entry name" value="Transketo_C/PFOR_II"/>
</dbReference>
<dbReference type="InterPro" id="IPR005475">
    <property type="entry name" value="Transketolase-like_Pyr-bd"/>
</dbReference>
<dbReference type="InterPro" id="IPR020826">
    <property type="entry name" value="Transketolase_BS"/>
</dbReference>
<dbReference type="InterPro" id="IPR033248">
    <property type="entry name" value="Transketolase_C"/>
</dbReference>
<dbReference type="InterPro" id="IPR049557">
    <property type="entry name" value="Transketolase_CS"/>
</dbReference>
<dbReference type="NCBIfam" id="TIGR00204">
    <property type="entry name" value="dxs"/>
    <property type="match status" value="1"/>
</dbReference>
<dbReference type="NCBIfam" id="NF003933">
    <property type="entry name" value="PRK05444.2-2"/>
    <property type="match status" value="1"/>
</dbReference>
<dbReference type="PANTHER" id="PTHR43322">
    <property type="entry name" value="1-D-DEOXYXYLULOSE 5-PHOSPHATE SYNTHASE-RELATED"/>
    <property type="match status" value="1"/>
</dbReference>
<dbReference type="PANTHER" id="PTHR43322:SF5">
    <property type="entry name" value="1-DEOXY-D-XYLULOSE-5-PHOSPHATE SYNTHASE, CHLOROPLASTIC"/>
    <property type="match status" value="1"/>
</dbReference>
<dbReference type="Pfam" id="PF13292">
    <property type="entry name" value="DXP_synthase_N"/>
    <property type="match status" value="1"/>
</dbReference>
<dbReference type="Pfam" id="PF02779">
    <property type="entry name" value="Transket_pyr"/>
    <property type="match status" value="1"/>
</dbReference>
<dbReference type="Pfam" id="PF02780">
    <property type="entry name" value="Transketolase_C"/>
    <property type="match status" value="1"/>
</dbReference>
<dbReference type="SMART" id="SM00861">
    <property type="entry name" value="Transket_pyr"/>
    <property type="match status" value="1"/>
</dbReference>
<dbReference type="SUPFAM" id="SSF52518">
    <property type="entry name" value="Thiamin diphosphate-binding fold (THDP-binding)"/>
    <property type="match status" value="2"/>
</dbReference>
<dbReference type="SUPFAM" id="SSF52922">
    <property type="entry name" value="TK C-terminal domain-like"/>
    <property type="match status" value="1"/>
</dbReference>
<dbReference type="PROSITE" id="PS00801">
    <property type="entry name" value="TRANSKETOLASE_1"/>
    <property type="match status" value="1"/>
</dbReference>
<dbReference type="PROSITE" id="PS00802">
    <property type="entry name" value="TRANSKETOLASE_2"/>
    <property type="match status" value="1"/>
</dbReference>
<organism>
    <name type="scientific">Yersinia pestis (strain Pestoides F)</name>
    <dbReference type="NCBI Taxonomy" id="386656"/>
    <lineage>
        <taxon>Bacteria</taxon>
        <taxon>Pseudomonadati</taxon>
        <taxon>Pseudomonadota</taxon>
        <taxon>Gammaproteobacteria</taxon>
        <taxon>Enterobacterales</taxon>
        <taxon>Yersiniaceae</taxon>
        <taxon>Yersinia</taxon>
    </lineage>
</organism>
<comment type="function">
    <text evidence="1">Catalyzes the acyloin condensation reaction between C atoms 2 and 3 of pyruvate and glyceraldehyde 3-phosphate to yield 1-deoxy-D-xylulose-5-phosphate (DXP).</text>
</comment>
<comment type="catalytic activity">
    <reaction evidence="1">
        <text>D-glyceraldehyde 3-phosphate + pyruvate + H(+) = 1-deoxy-D-xylulose 5-phosphate + CO2</text>
        <dbReference type="Rhea" id="RHEA:12605"/>
        <dbReference type="ChEBI" id="CHEBI:15361"/>
        <dbReference type="ChEBI" id="CHEBI:15378"/>
        <dbReference type="ChEBI" id="CHEBI:16526"/>
        <dbReference type="ChEBI" id="CHEBI:57792"/>
        <dbReference type="ChEBI" id="CHEBI:59776"/>
        <dbReference type="EC" id="2.2.1.7"/>
    </reaction>
</comment>
<comment type="cofactor">
    <cofactor evidence="1">
        <name>Mg(2+)</name>
        <dbReference type="ChEBI" id="CHEBI:18420"/>
    </cofactor>
    <text evidence="1">Binds 1 Mg(2+) ion per subunit.</text>
</comment>
<comment type="cofactor">
    <cofactor evidence="1">
        <name>thiamine diphosphate</name>
        <dbReference type="ChEBI" id="CHEBI:58937"/>
    </cofactor>
    <text evidence="1">Binds 1 thiamine pyrophosphate per subunit.</text>
</comment>
<comment type="pathway">
    <text evidence="1">Metabolic intermediate biosynthesis; 1-deoxy-D-xylulose 5-phosphate biosynthesis; 1-deoxy-D-xylulose 5-phosphate from D-glyceraldehyde 3-phosphate and pyruvate: step 1/1.</text>
</comment>
<comment type="subunit">
    <text evidence="1">Homodimer.</text>
</comment>
<comment type="similarity">
    <text evidence="1">Belongs to the transketolase family. DXPS subfamily.</text>
</comment>
<evidence type="ECO:0000255" key="1">
    <source>
        <dbReference type="HAMAP-Rule" id="MF_00315"/>
    </source>
</evidence>
<accession>A4TPG2</accession>
<reference key="1">
    <citation type="submission" date="2007-02" db="EMBL/GenBank/DDBJ databases">
        <title>Complete sequence of chromosome of Yersinia pestis Pestoides F.</title>
        <authorList>
            <consortium name="US DOE Joint Genome Institute"/>
            <person name="Copeland A."/>
            <person name="Lucas S."/>
            <person name="Lapidus A."/>
            <person name="Barry K."/>
            <person name="Detter J.C."/>
            <person name="Glavina del Rio T."/>
            <person name="Hammon N."/>
            <person name="Israni S."/>
            <person name="Dalin E."/>
            <person name="Tice H."/>
            <person name="Pitluck S."/>
            <person name="Di Bartolo G."/>
            <person name="Chain P."/>
            <person name="Malfatti S."/>
            <person name="Shin M."/>
            <person name="Vergez L."/>
            <person name="Schmutz J."/>
            <person name="Larimer F."/>
            <person name="Land M."/>
            <person name="Hauser L."/>
            <person name="Worsham P."/>
            <person name="Chu M."/>
            <person name="Bearden S."/>
            <person name="Garcia E."/>
            <person name="Richardson P."/>
        </authorList>
    </citation>
    <scope>NUCLEOTIDE SEQUENCE [LARGE SCALE GENOMIC DNA]</scope>
    <source>
        <strain>Pestoides F</strain>
    </source>
</reference>
<proteinExistence type="inferred from homology"/>
<keyword id="KW-0414">Isoprene biosynthesis</keyword>
<keyword id="KW-0460">Magnesium</keyword>
<keyword id="KW-0479">Metal-binding</keyword>
<keyword id="KW-0784">Thiamine biosynthesis</keyword>
<keyword id="KW-0786">Thiamine pyrophosphate</keyword>
<keyword id="KW-0808">Transferase</keyword>
<gene>
    <name evidence="1" type="primary">dxs</name>
    <name type="ordered locus">YPDSF_2812</name>
</gene>
<protein>
    <recommendedName>
        <fullName evidence="1">1-deoxy-D-xylulose-5-phosphate synthase</fullName>
        <ecNumber evidence="1">2.2.1.7</ecNumber>
    </recommendedName>
    <alternativeName>
        <fullName evidence="1">1-deoxyxylulose-5-phosphate synthase</fullName>
        <shortName evidence="1">DXP synthase</shortName>
        <shortName evidence="1">DXPS</shortName>
    </alternativeName>
</protein>
<sequence>MSLDIAKYPTLALAENPEELRMLPKESLPKLCDELRQYLLTCVSRSSGHFASGLGVVELTVALHYVYNTPFDHLIWDVGHQAYPHKILTGRRDRISTIRQKDGLHPFPWRGESEYDVLSVGHSSTSISAGLGMAVAAEREGKGRRTVCVIGDGAITAGMAFEAMSHAGDIHSDMLVILNDNGMSISENVGGLNNHLAQLLSGKLYASLREGGKKAFSALPPIKDLLKRTEEHLKGMVVPSTLFEELGFNYIGPVDGHDVHTLTQTLKNMRDLKSPQLLHIMTKKGKGYAPAEKDPIGWHAVPKFDPASGTLPKSQSSLPTYSKIFGEWLCETAAKDSKLMAVTPAMREGSGMVRFSREYPQQYFDVAIAEQHAVTFAAGLAIGGYKPVVAIYSTFLQRAYDQLIHDVAIQNLPVLFAIDRGGLVGADGQTHQGAFDLSFMRCIPNMVIMAPSDENECRQMLYTGYHHNGPAAVRYPRGNGTSAVLEPLEMLPIGKGVLRREGEKIAILCFGTLLAQAQLAAENLNATLVDMRFVKPLDEELVLEMAAKHQVLVTVEENAIMGGAGSGVNELLMAKRRWVPVLNIGLPDLFVPQGEQDEMRSELGLDAAGIQRQIEAWLA</sequence>
<name>DXS_YERPP</name>
<feature type="chain" id="PRO_1000019093" description="1-deoxy-D-xylulose-5-phosphate synthase">
    <location>
        <begin position="1"/>
        <end position="619"/>
    </location>
</feature>
<feature type="binding site" evidence="1">
    <location>
        <position position="80"/>
    </location>
    <ligand>
        <name>thiamine diphosphate</name>
        <dbReference type="ChEBI" id="CHEBI:58937"/>
    </ligand>
</feature>
<feature type="binding site" evidence="1">
    <location>
        <begin position="121"/>
        <end position="123"/>
    </location>
    <ligand>
        <name>thiamine diphosphate</name>
        <dbReference type="ChEBI" id="CHEBI:58937"/>
    </ligand>
</feature>
<feature type="binding site" evidence="1">
    <location>
        <position position="152"/>
    </location>
    <ligand>
        <name>Mg(2+)</name>
        <dbReference type="ChEBI" id="CHEBI:18420"/>
    </ligand>
</feature>
<feature type="binding site" evidence="1">
    <location>
        <begin position="153"/>
        <end position="154"/>
    </location>
    <ligand>
        <name>thiamine diphosphate</name>
        <dbReference type="ChEBI" id="CHEBI:58937"/>
    </ligand>
</feature>
<feature type="binding site" evidence="1">
    <location>
        <position position="181"/>
    </location>
    <ligand>
        <name>Mg(2+)</name>
        <dbReference type="ChEBI" id="CHEBI:18420"/>
    </ligand>
</feature>
<feature type="binding site" evidence="1">
    <location>
        <position position="181"/>
    </location>
    <ligand>
        <name>thiamine diphosphate</name>
        <dbReference type="ChEBI" id="CHEBI:58937"/>
    </ligand>
</feature>
<feature type="binding site" evidence="1">
    <location>
        <position position="288"/>
    </location>
    <ligand>
        <name>thiamine diphosphate</name>
        <dbReference type="ChEBI" id="CHEBI:58937"/>
    </ligand>
</feature>
<feature type="binding site" evidence="1">
    <location>
        <position position="370"/>
    </location>
    <ligand>
        <name>thiamine diphosphate</name>
        <dbReference type="ChEBI" id="CHEBI:58937"/>
    </ligand>
</feature>